<name>EL2B_HORSE</name>
<sequence>IVGGRPARPHAWPFMASLQRRGGHFCGATLIMGWGQLGTNRPLPSVLQELNVTVVTAGICFGDSGGPLVCNGL</sequence>
<protein>
    <recommendedName>
        <fullName>Neutrophil elastase 2B</fullName>
        <ecNumber>3.4.21.-</ecNumber>
    </recommendedName>
    <alternativeName>
        <fullName>Proteinase 2B</fullName>
    </alternativeName>
</protein>
<proteinExistence type="evidence at protein level"/>
<evidence type="ECO:0000255" key="1">
    <source>
        <dbReference type="PROSITE-ProRule" id="PRU00274"/>
    </source>
</evidence>
<evidence type="ECO:0000305" key="2"/>
<accession>P37358</accession>
<reference key="1">
    <citation type="journal article" date="1994" name="Biochem. J.">
        <title>Structural and functional characterization of elastases from horse neutrophils.</title>
        <authorList>
            <person name="Dubin A."/>
            <person name="Potempa J."/>
            <person name="Travis J."/>
        </authorList>
    </citation>
    <scope>PROTEIN SEQUENCE</scope>
    <source>
        <tissue>Neutrophil</tissue>
    </source>
</reference>
<feature type="chain" id="PRO_0000088681" description="Neutrophil elastase 2B">
    <location>
        <begin position="1"/>
        <end position="73"/>
    </location>
</feature>
<feature type="domain" description="Peptidase S1" evidence="1">
    <location>
        <begin position="1"/>
        <end position="73"/>
    </location>
</feature>
<feature type="active site" description="Charge relay system">
    <location>
        <position position="64"/>
    </location>
</feature>
<feature type="non-consecutive residues" evidence="2">
    <location>
        <begin position="31"/>
        <end position="32"/>
    </location>
</feature>
<feature type="non-consecutive residues" evidence="2">
    <location>
        <begin position="56"/>
        <end position="57"/>
    </location>
</feature>
<comment type="function">
    <text>May be involved in the degradation of connective tissue in chronic lung disease.</text>
</comment>
<comment type="similarity">
    <text evidence="1">Belongs to the peptidase S1 family. Elastase subfamily.</text>
</comment>
<organism>
    <name type="scientific">Equus caballus</name>
    <name type="common">Horse</name>
    <dbReference type="NCBI Taxonomy" id="9796"/>
    <lineage>
        <taxon>Eukaryota</taxon>
        <taxon>Metazoa</taxon>
        <taxon>Chordata</taxon>
        <taxon>Craniata</taxon>
        <taxon>Vertebrata</taxon>
        <taxon>Euteleostomi</taxon>
        <taxon>Mammalia</taxon>
        <taxon>Eutheria</taxon>
        <taxon>Laurasiatheria</taxon>
        <taxon>Perissodactyla</taxon>
        <taxon>Equidae</taxon>
        <taxon>Equus</taxon>
    </lineage>
</organism>
<keyword id="KW-0903">Direct protein sequencing</keyword>
<keyword id="KW-0378">Hydrolase</keyword>
<keyword id="KW-0645">Protease</keyword>
<keyword id="KW-1185">Reference proteome</keyword>
<keyword id="KW-0720">Serine protease</keyword>
<dbReference type="EC" id="3.4.21.-"/>
<dbReference type="PIR" id="S44462">
    <property type="entry name" value="S44462"/>
</dbReference>
<dbReference type="SMR" id="P37358"/>
<dbReference type="MEROPS" id="S01.131"/>
<dbReference type="InParanoid" id="P37358"/>
<dbReference type="Proteomes" id="UP000002281">
    <property type="component" value="Unplaced"/>
</dbReference>
<dbReference type="GO" id="GO:0004252">
    <property type="term" value="F:serine-type endopeptidase activity"/>
    <property type="evidence" value="ECO:0007669"/>
    <property type="project" value="InterPro"/>
</dbReference>
<dbReference type="GO" id="GO:0006508">
    <property type="term" value="P:proteolysis"/>
    <property type="evidence" value="ECO:0007669"/>
    <property type="project" value="UniProtKB-KW"/>
</dbReference>
<dbReference type="Gene3D" id="2.40.10.10">
    <property type="entry name" value="Trypsin-like serine proteases"/>
    <property type="match status" value="1"/>
</dbReference>
<dbReference type="InterPro" id="IPR050850">
    <property type="entry name" value="Peptidase_S1_Elastase_sf"/>
</dbReference>
<dbReference type="InterPro" id="IPR009003">
    <property type="entry name" value="Peptidase_S1_PA"/>
</dbReference>
<dbReference type="InterPro" id="IPR043504">
    <property type="entry name" value="Peptidase_S1_PA_chymotrypsin"/>
</dbReference>
<dbReference type="InterPro" id="IPR001254">
    <property type="entry name" value="Trypsin_dom"/>
</dbReference>
<dbReference type="PANTHER" id="PTHR24257">
    <property type="entry name" value="CHYMOTRYPSIN-LIKE ELASTASE FAMILY MEMBER"/>
    <property type="match status" value="1"/>
</dbReference>
<dbReference type="PANTHER" id="PTHR24257:SF16">
    <property type="entry name" value="NEUTROPHIL ELASTASE"/>
    <property type="match status" value="1"/>
</dbReference>
<dbReference type="Pfam" id="PF00089">
    <property type="entry name" value="Trypsin"/>
    <property type="match status" value="1"/>
</dbReference>
<dbReference type="SUPFAM" id="SSF50494">
    <property type="entry name" value="Trypsin-like serine proteases"/>
    <property type="match status" value="1"/>
</dbReference>
<dbReference type="PROSITE" id="PS00135">
    <property type="entry name" value="TRYPSIN_SER"/>
    <property type="match status" value="1"/>
</dbReference>